<accession>A7N5Q9</accession>
<reference key="1">
    <citation type="submission" date="2007-08" db="EMBL/GenBank/DDBJ databases">
        <authorList>
            <consortium name="The Vibrio harveyi Genome Sequencing Project"/>
            <person name="Bassler B."/>
            <person name="Clifton S.W."/>
            <person name="Fulton L."/>
            <person name="Delehaunty K."/>
            <person name="Fronick C."/>
            <person name="Harrison M."/>
            <person name="Markivic C."/>
            <person name="Fulton R."/>
            <person name="Tin-Wollam A.-M."/>
            <person name="Shah N."/>
            <person name="Pepin K."/>
            <person name="Nash W."/>
            <person name="Thiruvilangam P."/>
            <person name="Bhonagiri V."/>
            <person name="Waters C."/>
            <person name="Tu K.C."/>
            <person name="Irgon J."/>
            <person name="Wilson R.K."/>
        </authorList>
    </citation>
    <scope>NUCLEOTIDE SEQUENCE [LARGE SCALE GENOMIC DNA]</scope>
    <source>
        <strain>ATCC BAA-1116 / BB120</strain>
    </source>
</reference>
<keyword id="KW-0998">Cell outer membrane</keyword>
<keyword id="KW-0406">Ion transport</keyword>
<keyword id="KW-0472">Membrane</keyword>
<keyword id="KW-0626">Porin</keyword>
<keyword id="KW-0732">Signal</keyword>
<keyword id="KW-0762">Sugar transport</keyword>
<keyword id="KW-0812">Transmembrane</keyword>
<keyword id="KW-1134">Transmembrane beta strand</keyword>
<keyword id="KW-0813">Transport</keyword>
<proteinExistence type="inferred from homology"/>
<evidence type="ECO:0000255" key="1">
    <source>
        <dbReference type="HAMAP-Rule" id="MF_01301"/>
    </source>
</evidence>
<sequence length="447" mass="48530">MELRMKKVSVIAAAVAATLAAGSAFAVDFHGYMRAGVGVSADGGQQVTFEKQKIGRLGNEGDIYGEIQLGQEVYNNNGKTFYVDSMIAVTSNGSNDWEGTASNCGTTVSHPDGQDPSATTKCVDDAEFALRQFNVQAKGVLDFAPEATLWAGKRYYQRHDIHISDFYYWNISGAGAGVEGIEAGPGQLSFAWVRNDRNDNFKLGENNPGDTPDAGNDGGAANVNTLDLRYAGLPVWENGSLELGLNYALVNETDDASDAAKDAKDGVMFTAELTQGLDSGFNKTVFQYGTEGYSKTMAFYGDGSWYGAEANDGASGYRLINWGVIGMGQNWEMGHQLVYGVGEDMWDGQDKLETMSVVVRPMYKWDDNHKTIFEAGYAIDDNDGAENKFGKLTVAQAWSAGSSFWARPEIRVYASYLTADKDDNSNAFDGGRSDDTFQFGVQAEAWW</sequence>
<dbReference type="EMBL" id="CP000790">
    <property type="protein sequence ID" value="ABU72730.1"/>
    <property type="molecule type" value="Genomic_DNA"/>
</dbReference>
<dbReference type="SMR" id="A7N5Q9"/>
<dbReference type="KEGG" id="vha:VIBHAR_04821"/>
<dbReference type="PATRIC" id="fig|338187.36.peg.3708"/>
<dbReference type="Proteomes" id="UP000008152">
    <property type="component" value="Chromosome II"/>
</dbReference>
<dbReference type="GO" id="GO:0009279">
    <property type="term" value="C:cell outer membrane"/>
    <property type="evidence" value="ECO:0007669"/>
    <property type="project" value="UniProtKB-SubCell"/>
</dbReference>
<dbReference type="GO" id="GO:0046930">
    <property type="term" value="C:pore complex"/>
    <property type="evidence" value="ECO:0007669"/>
    <property type="project" value="UniProtKB-KW"/>
</dbReference>
<dbReference type="GO" id="GO:0042958">
    <property type="term" value="F:maltodextrin transmembrane transporter activity"/>
    <property type="evidence" value="ECO:0007669"/>
    <property type="project" value="InterPro"/>
</dbReference>
<dbReference type="GO" id="GO:0015481">
    <property type="term" value="F:maltose transporting porin activity"/>
    <property type="evidence" value="ECO:0007669"/>
    <property type="project" value="InterPro"/>
</dbReference>
<dbReference type="GO" id="GO:0006811">
    <property type="term" value="P:monoatomic ion transport"/>
    <property type="evidence" value="ECO:0007669"/>
    <property type="project" value="UniProtKB-KW"/>
</dbReference>
<dbReference type="CDD" id="cd01346">
    <property type="entry name" value="Maltoporin-like"/>
    <property type="match status" value="1"/>
</dbReference>
<dbReference type="Gene3D" id="2.40.170.10">
    <property type="entry name" value="Porin, LamB type"/>
    <property type="match status" value="1"/>
</dbReference>
<dbReference type="HAMAP" id="MF_01301">
    <property type="entry name" value="LamB"/>
    <property type="match status" value="1"/>
</dbReference>
<dbReference type="InterPro" id="IPR050286">
    <property type="entry name" value="G_neg_Bact_CarbUptk_Porin"/>
</dbReference>
<dbReference type="InterPro" id="IPR023738">
    <property type="entry name" value="Maltoporin"/>
</dbReference>
<dbReference type="InterPro" id="IPR003192">
    <property type="entry name" value="Porin_LamB"/>
</dbReference>
<dbReference type="InterPro" id="IPR036998">
    <property type="entry name" value="Porin_LamB_sf"/>
</dbReference>
<dbReference type="NCBIfam" id="NF006860">
    <property type="entry name" value="PRK09360.1"/>
    <property type="match status" value="1"/>
</dbReference>
<dbReference type="PANTHER" id="PTHR38762">
    <property type="entry name" value="CRYPTIC OUTER MEMBRANE PORIN BGLH-RELATED"/>
    <property type="match status" value="1"/>
</dbReference>
<dbReference type="PANTHER" id="PTHR38762:SF1">
    <property type="entry name" value="CRYPTIC OUTER MEMBRANE PORIN BGLH-RELATED"/>
    <property type="match status" value="1"/>
</dbReference>
<dbReference type="Pfam" id="PF02264">
    <property type="entry name" value="LamB"/>
    <property type="match status" value="1"/>
</dbReference>
<dbReference type="SUPFAM" id="SSF56935">
    <property type="entry name" value="Porins"/>
    <property type="match status" value="1"/>
</dbReference>
<organism>
    <name type="scientific">Vibrio campbellii (strain ATCC BAA-1116)</name>
    <dbReference type="NCBI Taxonomy" id="2902295"/>
    <lineage>
        <taxon>Bacteria</taxon>
        <taxon>Pseudomonadati</taxon>
        <taxon>Pseudomonadota</taxon>
        <taxon>Gammaproteobacteria</taxon>
        <taxon>Vibrionales</taxon>
        <taxon>Vibrionaceae</taxon>
        <taxon>Vibrio</taxon>
    </lineage>
</organism>
<gene>
    <name evidence="1" type="primary">lamB</name>
    <name type="ordered locus">VIBHAR_04821</name>
</gene>
<protein>
    <recommendedName>
        <fullName evidence="1">Maltoporin</fullName>
    </recommendedName>
    <alternativeName>
        <fullName evidence="1">Maltose-inducible porin</fullName>
    </alternativeName>
</protein>
<comment type="function">
    <text evidence="1">Involved in the transport of maltose and maltodextrins.</text>
</comment>
<comment type="catalytic activity">
    <reaction evidence="1">
        <text>beta-maltose(in) = beta-maltose(out)</text>
        <dbReference type="Rhea" id="RHEA:29731"/>
        <dbReference type="ChEBI" id="CHEBI:18147"/>
    </reaction>
</comment>
<comment type="subunit">
    <text evidence="1">Homotrimer formed of three 18-stranded antiparallel beta-barrels, containing three independent channels.</text>
</comment>
<comment type="subcellular location">
    <subcellularLocation>
        <location evidence="1">Cell outer membrane</location>
        <topology evidence="1">Multi-pass membrane protein</topology>
    </subcellularLocation>
</comment>
<comment type="induction">
    <text evidence="1">By maltose.</text>
</comment>
<comment type="similarity">
    <text evidence="1">Belongs to the porin LamB (TC 1.B.3) family.</text>
</comment>
<name>LAMB_VIBC1</name>
<feature type="signal peptide" evidence="1">
    <location>
        <begin position="1"/>
        <end position="26"/>
    </location>
</feature>
<feature type="chain" id="PRO_0000322016" description="Maltoporin">
    <location>
        <begin position="27"/>
        <end position="447"/>
    </location>
</feature>
<feature type="site" description="Greasy slide, important in sugar transport" evidence="1">
    <location>
        <position position="32"/>
    </location>
</feature>
<feature type="site" description="Greasy slide, important in sugar transport" evidence="1">
    <location>
        <position position="64"/>
    </location>
</feature>
<feature type="site" description="Greasy slide, important in sugar transport" evidence="1">
    <location>
        <position position="97"/>
    </location>
</feature>
<feature type="site" description="Important in sugar transport" evidence="1">
    <location>
        <position position="167"/>
    </location>
</feature>
<feature type="site" description="Greasy slide, important in sugar transport" evidence="1">
    <location>
        <position position="281"/>
    </location>
</feature>
<feature type="site" description="Greasy slide, important in sugar transport" evidence="1">
    <location>
        <position position="405"/>
    </location>
</feature>
<feature type="site" description="Greasy slide, important in sugar transport" evidence="1">
    <location>
        <position position="446"/>
    </location>
</feature>